<evidence type="ECO:0000255" key="1"/>
<evidence type="ECO:0000255" key="2">
    <source>
        <dbReference type="HAMAP-Rule" id="MF_00684"/>
    </source>
</evidence>
<sequence>MQPNDITFSQRFQDDILAGRKTITIRDESESHFKTGDVLRVGRFEDDGYFCTIEVTATSTVTLDTLTEKHAEQENMTLTELIKVIADIYPGQTQFYVIEFKCL</sequence>
<name>AC4CH_SHIBS</name>
<proteinExistence type="inferred from homology"/>
<reference key="1">
    <citation type="journal article" date="2005" name="Nucleic Acids Res.">
        <title>Genome dynamics and diversity of Shigella species, the etiologic agents of bacillary dysentery.</title>
        <authorList>
            <person name="Yang F."/>
            <person name="Yang J."/>
            <person name="Zhang X."/>
            <person name="Chen L."/>
            <person name="Jiang Y."/>
            <person name="Yan Y."/>
            <person name="Tang X."/>
            <person name="Wang J."/>
            <person name="Xiong Z."/>
            <person name="Dong J."/>
            <person name="Xue Y."/>
            <person name="Zhu Y."/>
            <person name="Xu X."/>
            <person name="Sun L."/>
            <person name="Chen S."/>
            <person name="Nie H."/>
            <person name="Peng J."/>
            <person name="Xu J."/>
            <person name="Wang Y."/>
            <person name="Yuan Z."/>
            <person name="Wen Y."/>
            <person name="Yao Z."/>
            <person name="Shen Y."/>
            <person name="Qiang B."/>
            <person name="Hou Y."/>
            <person name="Yu J."/>
            <person name="Jin Q."/>
        </authorList>
    </citation>
    <scope>NUCLEOTIDE SEQUENCE [LARGE SCALE GENOMIC DNA]</scope>
    <source>
        <strain>Sb227</strain>
    </source>
</reference>
<feature type="chain" id="PRO_1000044960" description="N(4)-acetylcytidine amidohydrolase">
    <location>
        <begin position="1"/>
        <end position="103"/>
    </location>
</feature>
<feature type="domain" description="ASCH" evidence="1">
    <location>
        <begin position="6"/>
        <end position="101"/>
    </location>
</feature>
<feature type="active site" description="Proton acceptor" evidence="2">
    <location>
        <position position="21"/>
    </location>
</feature>
<feature type="active site" description="Nucleophile" evidence="2">
    <location>
        <position position="24"/>
    </location>
</feature>
<feature type="active site" description="Proton donor" evidence="2">
    <location>
        <position position="74"/>
    </location>
</feature>
<organism>
    <name type="scientific">Shigella boydii serotype 4 (strain Sb227)</name>
    <dbReference type="NCBI Taxonomy" id="300268"/>
    <lineage>
        <taxon>Bacteria</taxon>
        <taxon>Pseudomonadati</taxon>
        <taxon>Pseudomonadota</taxon>
        <taxon>Gammaproteobacteria</taxon>
        <taxon>Enterobacterales</taxon>
        <taxon>Enterobacteriaceae</taxon>
        <taxon>Shigella</taxon>
    </lineage>
</organism>
<dbReference type="EC" id="3.5.1.135" evidence="2"/>
<dbReference type="EMBL" id="CP000036">
    <property type="protein sequence ID" value="ABB67596.1"/>
    <property type="molecule type" value="Genomic_DNA"/>
</dbReference>
<dbReference type="RefSeq" id="WP_001182983.1">
    <property type="nucleotide sequence ID" value="NC_007613.1"/>
</dbReference>
<dbReference type="SMR" id="Q31WG2"/>
<dbReference type="KEGG" id="sbo:SBO_3092"/>
<dbReference type="HOGENOM" id="CLU_152586_0_0_6"/>
<dbReference type="Proteomes" id="UP000007067">
    <property type="component" value="Chromosome"/>
</dbReference>
<dbReference type="GO" id="GO:0005829">
    <property type="term" value="C:cytosol"/>
    <property type="evidence" value="ECO:0007669"/>
    <property type="project" value="TreeGrafter"/>
</dbReference>
<dbReference type="GO" id="GO:0016813">
    <property type="term" value="F:hydrolase activity, acting on carbon-nitrogen (but not peptide) bonds, in linear amidines"/>
    <property type="evidence" value="ECO:0007669"/>
    <property type="project" value="UniProtKB-UniRule"/>
</dbReference>
<dbReference type="GO" id="GO:0106251">
    <property type="term" value="F:N4-acetylcytidine amidohydrolase activity"/>
    <property type="evidence" value="ECO:0007669"/>
    <property type="project" value="RHEA"/>
</dbReference>
<dbReference type="CDD" id="cd06552">
    <property type="entry name" value="ASCH_yqfb_like"/>
    <property type="match status" value="1"/>
</dbReference>
<dbReference type="FunFam" id="2.30.130.30:FF:000001">
    <property type="entry name" value="UPF0267 protein YqfB"/>
    <property type="match status" value="1"/>
</dbReference>
<dbReference type="Gene3D" id="2.30.130.30">
    <property type="entry name" value="Hypothetical protein"/>
    <property type="match status" value="1"/>
</dbReference>
<dbReference type="HAMAP" id="MF_00684">
    <property type="entry name" value="ac4C_amidohydr"/>
    <property type="match status" value="1"/>
</dbReference>
<dbReference type="InterPro" id="IPR008314">
    <property type="entry name" value="AC4CH"/>
</dbReference>
<dbReference type="InterPro" id="IPR007374">
    <property type="entry name" value="ASCH_domain"/>
</dbReference>
<dbReference type="InterPro" id="IPR015947">
    <property type="entry name" value="PUA-like_sf"/>
</dbReference>
<dbReference type="NCBIfam" id="NF003443">
    <property type="entry name" value="PRK04980.1"/>
    <property type="match status" value="1"/>
</dbReference>
<dbReference type="PANTHER" id="PTHR38088">
    <property type="entry name" value="UCP029143 FAMILY PROTEIN"/>
    <property type="match status" value="1"/>
</dbReference>
<dbReference type="PANTHER" id="PTHR38088:SF2">
    <property type="entry name" value="UCP029143 FAMILY PROTEIN"/>
    <property type="match status" value="1"/>
</dbReference>
<dbReference type="Pfam" id="PF04266">
    <property type="entry name" value="ASCH"/>
    <property type="match status" value="1"/>
</dbReference>
<dbReference type="PIRSF" id="PIRSF029143">
    <property type="entry name" value="UCP029143"/>
    <property type="match status" value="1"/>
</dbReference>
<dbReference type="SMART" id="SM01022">
    <property type="entry name" value="ASCH"/>
    <property type="match status" value="1"/>
</dbReference>
<dbReference type="SUPFAM" id="SSF88697">
    <property type="entry name" value="PUA domain-like"/>
    <property type="match status" value="1"/>
</dbReference>
<comment type="function">
    <text evidence="2">Catalyzes the hydrolysis of N(4)-acetylcytidine (ac4C).</text>
</comment>
<comment type="catalytic activity">
    <reaction evidence="2">
        <text>N(4)-acetylcytidine + H2O = cytidine + acetate + H(+)</text>
        <dbReference type="Rhea" id="RHEA:62932"/>
        <dbReference type="ChEBI" id="CHEBI:15377"/>
        <dbReference type="ChEBI" id="CHEBI:15378"/>
        <dbReference type="ChEBI" id="CHEBI:17562"/>
        <dbReference type="ChEBI" id="CHEBI:30089"/>
        <dbReference type="ChEBI" id="CHEBI:70989"/>
        <dbReference type="EC" id="3.5.1.135"/>
    </reaction>
</comment>
<comment type="catalytic activity">
    <reaction evidence="2">
        <text>N(4)-acetyl-2'-deoxycytidine + H2O = 2'-deoxycytidine + acetate + H(+)</text>
        <dbReference type="Rhea" id="RHEA:62936"/>
        <dbReference type="ChEBI" id="CHEBI:15377"/>
        <dbReference type="ChEBI" id="CHEBI:15378"/>
        <dbReference type="ChEBI" id="CHEBI:15698"/>
        <dbReference type="ChEBI" id="CHEBI:30089"/>
        <dbReference type="ChEBI" id="CHEBI:146133"/>
        <dbReference type="EC" id="3.5.1.135"/>
    </reaction>
</comment>
<comment type="catalytic activity">
    <reaction evidence="2">
        <text>N(4)-acetylcytosine + H2O = cytosine + acetate + H(+)</text>
        <dbReference type="Rhea" id="RHEA:62940"/>
        <dbReference type="ChEBI" id="CHEBI:15377"/>
        <dbReference type="ChEBI" id="CHEBI:15378"/>
        <dbReference type="ChEBI" id="CHEBI:16040"/>
        <dbReference type="ChEBI" id="CHEBI:30089"/>
        <dbReference type="ChEBI" id="CHEBI:146134"/>
        <dbReference type="EC" id="3.5.1.135"/>
    </reaction>
</comment>
<comment type="similarity">
    <text evidence="2">Belongs to the N(4)-acetylcytidine amidohydrolase family.</text>
</comment>
<accession>Q31WG2</accession>
<protein>
    <recommendedName>
        <fullName evidence="2">N(4)-acetylcytidine amidohydrolase</fullName>
        <shortName evidence="2">ac4C amidohydrolase</shortName>
        <ecNumber evidence="2">3.5.1.135</ecNumber>
    </recommendedName>
</protein>
<keyword id="KW-0378">Hydrolase</keyword>
<gene>
    <name type="primary">yqfB</name>
    <name type="ordered locus">SBO_3092</name>
</gene>